<feature type="chain" id="PRO_1000022165" description="Valine--tRNA ligase">
    <location>
        <begin position="1"/>
        <end position="876"/>
    </location>
</feature>
<feature type="coiled-coil region" evidence="1">
    <location>
        <begin position="847"/>
        <end position="876"/>
    </location>
</feature>
<feature type="short sequence motif" description="'HIGH' region">
    <location>
        <begin position="43"/>
        <end position="53"/>
    </location>
</feature>
<feature type="short sequence motif" description="'KMSKS' region">
    <location>
        <begin position="534"/>
        <end position="538"/>
    </location>
</feature>
<feature type="binding site" evidence="1">
    <location>
        <position position="537"/>
    </location>
    <ligand>
        <name>ATP</name>
        <dbReference type="ChEBI" id="CHEBI:30616"/>
    </ligand>
</feature>
<keyword id="KW-0030">Aminoacyl-tRNA synthetase</keyword>
<keyword id="KW-0067">ATP-binding</keyword>
<keyword id="KW-0175">Coiled coil</keyword>
<keyword id="KW-0963">Cytoplasm</keyword>
<keyword id="KW-0436">Ligase</keyword>
<keyword id="KW-0547">Nucleotide-binding</keyword>
<keyword id="KW-0648">Protein biosynthesis</keyword>
<sequence length="876" mass="100797">MAIASQYNAKKVEDKWYDYWMKNNYFHSEVDDREPYTIVIPPPNVTGVLHMGHMLNNTIQDVLVRRARLKGLNACWVPGTDHASIATEAKVVAKLKAEGIDKNDLTREEFLQHAWEWTHKHGGIILQQLKHLGASCDWERTKFTMDDDMSASVIKVFVDLYEKGLVYRGYRMVNWDPQAKTTLSDEEVNYEERNGKLYHLKYKIDGTEDYLTIATTRPETILGDTAICINPNDERFTHLKGKKAIVPICNRTIPIIEDEYVDMEFGTGCLKVTPAHDENDKNLGDKHDLDVIDIFNDDATLNNYGLHYEGKDRFVVRAEIVEELELYGFLDKVEDHINKVGTSERTGAVIEPKLSDQWFLKMKEMAQPAIKAVLGDDINLVPEKFLNTYRHWMENVRDWNISRQLWWGHQIPAYFYGKGKNDFVVAETLNQAVLKAREVTGNAELQASDLTQDKDALDTWFSSWLWPMSVFNGILEPENKEIEYYYPTNDLVTAPEILFFWVARMIMAGYEYRGERPFKNVYLTGIVRDKQRRKMSKSLGNSPDPLGLIEQYGADGVRVGMLLSSPAGNDLMFDEDLCKQGSGFTNKIWNAFRLVKGWEISEKIEQPETAKMAINWYTARFQKTIREIEDHYSKYRISDALMSTYKLIWDDYCSWFLEMVKPGYGEPMDAKTYKAIIAILEENLKILHPFMPFVTEEIWQEITERTPEEALIIAKWPVEKEFDETIIKEFSHAAEVIAGVRKIRKDKNISFKNEIDFSVLNNENTSKTFDGVISKMGNISNLEYVTGSVDGALSFRVRSNEYFIPIAGAIDVEAEKEKIQEELNYTEGFLKSVDKKLSNERFVNNAPEKVVAIEKAKKADAEAKIEALKASLKSLS</sequence>
<proteinExistence type="inferred from homology"/>
<protein>
    <recommendedName>
        <fullName evidence="1">Valine--tRNA ligase</fullName>
        <ecNumber evidence="1">6.1.1.9</ecNumber>
    </recommendedName>
    <alternativeName>
        <fullName evidence="1">Valyl-tRNA synthetase</fullName>
        <shortName evidence="1">ValRS</shortName>
    </alternativeName>
</protein>
<gene>
    <name evidence="1" type="primary">valS</name>
    <name type="ordered locus">GFO_2933</name>
</gene>
<reference key="1">
    <citation type="journal article" date="2006" name="Environ. Microbiol.">
        <title>Whole genome analysis of the marine Bacteroidetes'Gramella forsetii' reveals adaptations to degradation of polymeric organic matter.</title>
        <authorList>
            <person name="Bauer M."/>
            <person name="Kube M."/>
            <person name="Teeling H."/>
            <person name="Richter M."/>
            <person name="Lombardot T."/>
            <person name="Allers E."/>
            <person name="Wuerdemann C.A."/>
            <person name="Quast C."/>
            <person name="Kuhl H."/>
            <person name="Knaust F."/>
            <person name="Woebken D."/>
            <person name="Bischof K."/>
            <person name="Mussmann M."/>
            <person name="Choudhuri J.V."/>
            <person name="Meyer F."/>
            <person name="Reinhardt R."/>
            <person name="Amann R.I."/>
            <person name="Gloeckner F.O."/>
        </authorList>
    </citation>
    <scope>NUCLEOTIDE SEQUENCE [LARGE SCALE GENOMIC DNA]</scope>
    <source>
        <strain>DSM 17595 / CGMCC 1.15422 / KT0803</strain>
    </source>
</reference>
<organism>
    <name type="scientific">Christiangramia forsetii (strain DSM 17595 / CGMCC 1.15422 / KT0803)</name>
    <name type="common">Gramella forsetii</name>
    <dbReference type="NCBI Taxonomy" id="411154"/>
    <lineage>
        <taxon>Bacteria</taxon>
        <taxon>Pseudomonadati</taxon>
        <taxon>Bacteroidota</taxon>
        <taxon>Flavobacteriia</taxon>
        <taxon>Flavobacteriales</taxon>
        <taxon>Flavobacteriaceae</taxon>
        <taxon>Christiangramia</taxon>
    </lineage>
</organism>
<dbReference type="EC" id="6.1.1.9" evidence="1"/>
<dbReference type="EMBL" id="CU207366">
    <property type="protein sequence ID" value="CAL67880.1"/>
    <property type="molecule type" value="Genomic_DNA"/>
</dbReference>
<dbReference type="RefSeq" id="WP_011710781.1">
    <property type="nucleotide sequence ID" value="NC_008571.1"/>
</dbReference>
<dbReference type="SMR" id="A0M5I5"/>
<dbReference type="STRING" id="411154.GFO_2933"/>
<dbReference type="KEGG" id="gfo:GFO_2933"/>
<dbReference type="eggNOG" id="COG0525">
    <property type="taxonomic scope" value="Bacteria"/>
</dbReference>
<dbReference type="HOGENOM" id="CLU_001493_0_2_10"/>
<dbReference type="OrthoDB" id="9810365at2"/>
<dbReference type="Proteomes" id="UP000000755">
    <property type="component" value="Chromosome"/>
</dbReference>
<dbReference type="GO" id="GO:0005829">
    <property type="term" value="C:cytosol"/>
    <property type="evidence" value="ECO:0007669"/>
    <property type="project" value="TreeGrafter"/>
</dbReference>
<dbReference type="GO" id="GO:0002161">
    <property type="term" value="F:aminoacyl-tRNA deacylase activity"/>
    <property type="evidence" value="ECO:0007669"/>
    <property type="project" value="InterPro"/>
</dbReference>
<dbReference type="GO" id="GO:0005524">
    <property type="term" value="F:ATP binding"/>
    <property type="evidence" value="ECO:0007669"/>
    <property type="project" value="UniProtKB-UniRule"/>
</dbReference>
<dbReference type="GO" id="GO:0004832">
    <property type="term" value="F:valine-tRNA ligase activity"/>
    <property type="evidence" value="ECO:0007669"/>
    <property type="project" value="UniProtKB-UniRule"/>
</dbReference>
<dbReference type="GO" id="GO:0006438">
    <property type="term" value="P:valyl-tRNA aminoacylation"/>
    <property type="evidence" value="ECO:0007669"/>
    <property type="project" value="UniProtKB-UniRule"/>
</dbReference>
<dbReference type="CDD" id="cd07962">
    <property type="entry name" value="Anticodon_Ia_Val"/>
    <property type="match status" value="1"/>
</dbReference>
<dbReference type="CDD" id="cd00817">
    <property type="entry name" value="ValRS_core"/>
    <property type="match status" value="1"/>
</dbReference>
<dbReference type="FunFam" id="1.10.287.380:FF:000001">
    <property type="entry name" value="Valine--tRNA ligase"/>
    <property type="match status" value="1"/>
</dbReference>
<dbReference type="FunFam" id="3.40.50.620:FF:000032">
    <property type="entry name" value="Valine--tRNA ligase"/>
    <property type="match status" value="1"/>
</dbReference>
<dbReference type="Gene3D" id="3.40.50.620">
    <property type="entry name" value="HUPs"/>
    <property type="match status" value="2"/>
</dbReference>
<dbReference type="Gene3D" id="1.10.730.10">
    <property type="entry name" value="Isoleucyl-tRNA Synthetase, Domain 1"/>
    <property type="match status" value="1"/>
</dbReference>
<dbReference type="Gene3D" id="1.10.287.380">
    <property type="entry name" value="Valyl-tRNA synthetase, C-terminal domain"/>
    <property type="match status" value="1"/>
</dbReference>
<dbReference type="Gene3D" id="3.90.740.10">
    <property type="entry name" value="Valyl/Leucyl/Isoleucyl-tRNA synthetase, editing domain"/>
    <property type="match status" value="2"/>
</dbReference>
<dbReference type="HAMAP" id="MF_02004">
    <property type="entry name" value="Val_tRNA_synth_type1"/>
    <property type="match status" value="1"/>
</dbReference>
<dbReference type="InterPro" id="IPR001412">
    <property type="entry name" value="aa-tRNA-synth_I_CS"/>
</dbReference>
<dbReference type="InterPro" id="IPR002300">
    <property type="entry name" value="aa-tRNA-synth_Ia"/>
</dbReference>
<dbReference type="InterPro" id="IPR033705">
    <property type="entry name" value="Anticodon_Ia_Val"/>
</dbReference>
<dbReference type="InterPro" id="IPR013155">
    <property type="entry name" value="M/V/L/I-tRNA-synth_anticd-bd"/>
</dbReference>
<dbReference type="InterPro" id="IPR014729">
    <property type="entry name" value="Rossmann-like_a/b/a_fold"/>
</dbReference>
<dbReference type="InterPro" id="IPR010978">
    <property type="entry name" value="tRNA-bd_arm"/>
</dbReference>
<dbReference type="InterPro" id="IPR009080">
    <property type="entry name" value="tRNAsynth_Ia_anticodon-bd"/>
</dbReference>
<dbReference type="InterPro" id="IPR037118">
    <property type="entry name" value="Val-tRNA_synth_C_sf"/>
</dbReference>
<dbReference type="InterPro" id="IPR019499">
    <property type="entry name" value="Val-tRNA_synth_tRNA-bd"/>
</dbReference>
<dbReference type="InterPro" id="IPR009008">
    <property type="entry name" value="Val/Leu/Ile-tRNA-synth_edit"/>
</dbReference>
<dbReference type="InterPro" id="IPR002303">
    <property type="entry name" value="Valyl-tRNA_ligase"/>
</dbReference>
<dbReference type="NCBIfam" id="NF004349">
    <property type="entry name" value="PRK05729.1"/>
    <property type="match status" value="1"/>
</dbReference>
<dbReference type="NCBIfam" id="TIGR00422">
    <property type="entry name" value="valS"/>
    <property type="match status" value="1"/>
</dbReference>
<dbReference type="PANTHER" id="PTHR11946:SF109">
    <property type="entry name" value="VALINE--TRNA LIGASE"/>
    <property type="match status" value="1"/>
</dbReference>
<dbReference type="PANTHER" id="PTHR11946">
    <property type="entry name" value="VALYL-TRNA SYNTHETASES"/>
    <property type="match status" value="1"/>
</dbReference>
<dbReference type="Pfam" id="PF08264">
    <property type="entry name" value="Anticodon_1"/>
    <property type="match status" value="1"/>
</dbReference>
<dbReference type="Pfam" id="PF00133">
    <property type="entry name" value="tRNA-synt_1"/>
    <property type="match status" value="1"/>
</dbReference>
<dbReference type="Pfam" id="PF10458">
    <property type="entry name" value="Val_tRNA-synt_C"/>
    <property type="match status" value="1"/>
</dbReference>
<dbReference type="PRINTS" id="PR00986">
    <property type="entry name" value="TRNASYNTHVAL"/>
</dbReference>
<dbReference type="SUPFAM" id="SSF47323">
    <property type="entry name" value="Anticodon-binding domain of a subclass of class I aminoacyl-tRNA synthetases"/>
    <property type="match status" value="1"/>
</dbReference>
<dbReference type="SUPFAM" id="SSF52374">
    <property type="entry name" value="Nucleotidylyl transferase"/>
    <property type="match status" value="1"/>
</dbReference>
<dbReference type="SUPFAM" id="SSF46589">
    <property type="entry name" value="tRNA-binding arm"/>
    <property type="match status" value="1"/>
</dbReference>
<dbReference type="SUPFAM" id="SSF50677">
    <property type="entry name" value="ValRS/IleRS/LeuRS editing domain"/>
    <property type="match status" value="1"/>
</dbReference>
<dbReference type="PROSITE" id="PS00178">
    <property type="entry name" value="AA_TRNA_LIGASE_I"/>
    <property type="match status" value="1"/>
</dbReference>
<name>SYV_CHRFK</name>
<comment type="function">
    <text evidence="1">Catalyzes the attachment of valine to tRNA(Val). As ValRS can inadvertently accommodate and process structurally similar amino acids such as threonine, to avoid such errors, it has a 'posttransfer' editing activity that hydrolyzes mischarged Thr-tRNA(Val) in a tRNA-dependent manner.</text>
</comment>
<comment type="catalytic activity">
    <reaction evidence="1">
        <text>tRNA(Val) + L-valine + ATP = L-valyl-tRNA(Val) + AMP + diphosphate</text>
        <dbReference type="Rhea" id="RHEA:10704"/>
        <dbReference type="Rhea" id="RHEA-COMP:9672"/>
        <dbReference type="Rhea" id="RHEA-COMP:9708"/>
        <dbReference type="ChEBI" id="CHEBI:30616"/>
        <dbReference type="ChEBI" id="CHEBI:33019"/>
        <dbReference type="ChEBI" id="CHEBI:57762"/>
        <dbReference type="ChEBI" id="CHEBI:78442"/>
        <dbReference type="ChEBI" id="CHEBI:78537"/>
        <dbReference type="ChEBI" id="CHEBI:456215"/>
        <dbReference type="EC" id="6.1.1.9"/>
    </reaction>
</comment>
<comment type="subunit">
    <text evidence="1">Monomer.</text>
</comment>
<comment type="subcellular location">
    <subcellularLocation>
        <location evidence="1">Cytoplasm</location>
    </subcellularLocation>
</comment>
<comment type="domain">
    <text evidence="1">ValRS has two distinct active sites: one for aminoacylation and one for editing. The misactivated threonine is translocated from the active site to the editing site.</text>
</comment>
<comment type="domain">
    <text evidence="1">The C-terminal coiled-coil domain is crucial for aminoacylation activity.</text>
</comment>
<comment type="similarity">
    <text evidence="1">Belongs to the class-I aminoacyl-tRNA synthetase family. ValS type 1 subfamily.</text>
</comment>
<evidence type="ECO:0000255" key="1">
    <source>
        <dbReference type="HAMAP-Rule" id="MF_02004"/>
    </source>
</evidence>
<accession>A0M5I5</accession>